<keyword id="KW-0479">Metal-binding</keyword>
<keyword id="KW-0520">NAD</keyword>
<keyword id="KW-0560">Oxidoreductase</keyword>
<keyword id="KW-1185">Reference proteome</keyword>
<keyword id="KW-0862">Zinc</keyword>
<organism>
    <name type="scientific">Pseudomonas aeruginosa (strain ATCC 15692 / DSM 22644 / CIP 104116 / JCM 14847 / LMG 12228 / 1C / PRS 101 / PAO1)</name>
    <dbReference type="NCBI Taxonomy" id="208964"/>
    <lineage>
        <taxon>Bacteria</taxon>
        <taxon>Pseudomonadati</taxon>
        <taxon>Pseudomonadota</taxon>
        <taxon>Gammaproteobacteria</taxon>
        <taxon>Pseudomonadales</taxon>
        <taxon>Pseudomonadaceae</taxon>
        <taxon>Pseudomonas</taxon>
    </lineage>
</organism>
<proteinExistence type="inferred from homology"/>
<sequence>MSGNRGVVYLGPGKVEVQNIPYPKMQDPQGRQIDHGVILRVVSTNICGSDQHMVRGRTTAPEGLVLGHEITGEVVEIGRGVETMKIGDLVSVPFNVACGHCRTCKEQHTGVCLTVNPARAGGAYGYVDMGGWVGGQAEYVLVPYADFNLLKLPNREAAMEKIRDLTCLSDILPTGYHGAVTAGVGPGSTVYIAGAGPVGLAAAASARLLGAAVVIVGDVNPTRLAHAKKQGFEIADLSKDTPLHEQIAALLGEPEVDCAVDAVGFEARGHGHSGSQQEAPATVLNSLMGITRVAGKIGIPGLYVTEDPGAVDAAAKHGALSIRFGLGWAKSHSFHTGQTPVMKYNRQLMQAIMWDRIKIADIVGVEVITLDDAPKGYGEFDAGVPKKFVIDPHNLFRAA</sequence>
<feature type="initiator methionine" description="Removed" evidence="1">
    <location>
        <position position="1"/>
    </location>
</feature>
<feature type="chain" id="PRO_0000287742" description="Glutathione-independent formaldehyde dehydrogenase">
    <location>
        <begin position="2"/>
        <end position="399"/>
    </location>
</feature>
<feature type="binding site" evidence="1">
    <location>
        <position position="47"/>
    </location>
    <ligand>
        <name>Zn(2+)</name>
        <dbReference type="ChEBI" id="CHEBI:29105"/>
        <label>1</label>
        <note>catalytic</note>
    </ligand>
</feature>
<feature type="binding site" evidence="1">
    <location>
        <position position="48"/>
    </location>
    <ligand>
        <name>NAD(+)</name>
        <dbReference type="ChEBI" id="CHEBI:57540"/>
    </ligand>
</feature>
<feature type="binding site" evidence="1">
    <location>
        <position position="49"/>
    </location>
    <ligand>
        <name>NAD(+)</name>
        <dbReference type="ChEBI" id="CHEBI:57540"/>
    </ligand>
</feature>
<feature type="binding site" evidence="1">
    <location>
        <position position="52"/>
    </location>
    <ligand>
        <name>NAD(+)</name>
        <dbReference type="ChEBI" id="CHEBI:57540"/>
    </ligand>
</feature>
<feature type="binding site" evidence="1">
    <location>
        <position position="68"/>
    </location>
    <ligand>
        <name>Zn(2+)</name>
        <dbReference type="ChEBI" id="CHEBI:29105"/>
        <label>1</label>
        <note>catalytic</note>
    </ligand>
</feature>
<feature type="binding site" evidence="1">
    <location>
        <position position="98"/>
    </location>
    <ligand>
        <name>Zn(2+)</name>
        <dbReference type="ChEBI" id="CHEBI:29105"/>
        <label>2</label>
    </ligand>
</feature>
<feature type="binding site" evidence="1">
    <location>
        <position position="101"/>
    </location>
    <ligand>
        <name>Zn(2+)</name>
        <dbReference type="ChEBI" id="CHEBI:29105"/>
        <label>2</label>
    </ligand>
</feature>
<feature type="binding site" evidence="1">
    <location>
        <position position="104"/>
    </location>
    <ligand>
        <name>Zn(2+)</name>
        <dbReference type="ChEBI" id="CHEBI:29105"/>
        <label>2</label>
    </ligand>
</feature>
<feature type="binding site" evidence="1">
    <location>
        <position position="112"/>
    </location>
    <ligand>
        <name>Zn(2+)</name>
        <dbReference type="ChEBI" id="CHEBI:29105"/>
        <label>2</label>
    </ligand>
</feature>
<feature type="binding site" evidence="1">
    <location>
        <position position="170"/>
    </location>
    <ligand>
        <name>Zn(2+)</name>
        <dbReference type="ChEBI" id="CHEBI:29105"/>
        <label>1</label>
        <note>catalytic</note>
    </ligand>
</feature>
<feature type="binding site" evidence="1">
    <location>
        <position position="198"/>
    </location>
    <ligand>
        <name>NAD(+)</name>
        <dbReference type="ChEBI" id="CHEBI:57540"/>
    </ligand>
</feature>
<feature type="binding site" evidence="1">
    <location>
        <position position="218"/>
    </location>
    <ligand>
        <name>NAD(+)</name>
        <dbReference type="ChEBI" id="CHEBI:57540"/>
    </ligand>
</feature>
<feature type="binding site" evidence="1">
    <location>
        <position position="223"/>
    </location>
    <ligand>
        <name>NAD(+)</name>
        <dbReference type="ChEBI" id="CHEBI:57540"/>
    </ligand>
</feature>
<feature type="binding site" evidence="1">
    <location>
        <position position="263"/>
    </location>
    <ligand>
        <name>NAD(+)</name>
        <dbReference type="ChEBI" id="CHEBI:57540"/>
    </ligand>
</feature>
<feature type="binding site" evidence="1">
    <location>
        <position position="268"/>
    </location>
    <ligand>
        <name>NAD(+)</name>
        <dbReference type="ChEBI" id="CHEBI:57540"/>
    </ligand>
</feature>
<feature type="binding site" evidence="1">
    <location>
        <position position="270"/>
    </location>
    <ligand>
        <name>NAD(+)</name>
        <dbReference type="ChEBI" id="CHEBI:57540"/>
    </ligand>
</feature>
<feature type="binding site" evidence="1">
    <location>
        <position position="300"/>
    </location>
    <ligand>
        <name>NAD(+)</name>
        <dbReference type="ChEBI" id="CHEBI:57540"/>
    </ligand>
</feature>
<feature type="binding site" evidence="1">
    <location>
        <position position="302"/>
    </location>
    <ligand>
        <name>NAD(+)</name>
        <dbReference type="ChEBI" id="CHEBI:57540"/>
    </ligand>
</feature>
<feature type="binding site" evidence="1">
    <location>
        <position position="337"/>
    </location>
    <ligand>
        <name>NAD(+)</name>
        <dbReference type="ChEBI" id="CHEBI:57540"/>
    </ligand>
</feature>
<feature type="binding site" evidence="1">
    <location>
        <position position="339"/>
    </location>
    <ligand>
        <name>NAD(+)</name>
        <dbReference type="ChEBI" id="CHEBI:57540"/>
    </ligand>
</feature>
<gene>
    <name type="primary">fdhA</name>
    <name type="ordered locus">PA5421</name>
</gene>
<protein>
    <recommendedName>
        <fullName evidence="1">Glutathione-independent formaldehyde dehydrogenase</fullName>
        <shortName>FALDH</shortName>
        <shortName>FDH</shortName>
        <ecNumber evidence="1">1.2.1.46</ecNumber>
    </recommendedName>
</protein>
<name>FALDH_PSEAE</name>
<reference key="1">
    <citation type="journal article" date="2000" name="Nature">
        <title>Complete genome sequence of Pseudomonas aeruginosa PAO1, an opportunistic pathogen.</title>
        <authorList>
            <person name="Stover C.K."/>
            <person name="Pham X.-Q.T."/>
            <person name="Erwin A.L."/>
            <person name="Mizoguchi S.D."/>
            <person name="Warrener P."/>
            <person name="Hickey M.J."/>
            <person name="Brinkman F.S.L."/>
            <person name="Hufnagle W.O."/>
            <person name="Kowalik D.J."/>
            <person name="Lagrou M."/>
            <person name="Garber R.L."/>
            <person name="Goltry L."/>
            <person name="Tolentino E."/>
            <person name="Westbrock-Wadman S."/>
            <person name="Yuan Y."/>
            <person name="Brody L.L."/>
            <person name="Coulter S.N."/>
            <person name="Folger K.R."/>
            <person name="Kas A."/>
            <person name="Larbig K."/>
            <person name="Lim R.M."/>
            <person name="Smith K.A."/>
            <person name="Spencer D.H."/>
            <person name="Wong G.K.-S."/>
            <person name="Wu Z."/>
            <person name="Paulsen I.T."/>
            <person name="Reizer J."/>
            <person name="Saier M.H. Jr."/>
            <person name="Hancock R.E.W."/>
            <person name="Lory S."/>
            <person name="Olson M.V."/>
        </authorList>
    </citation>
    <scope>NUCLEOTIDE SEQUENCE [LARGE SCALE GENOMIC DNA]</scope>
    <source>
        <strain>ATCC 15692 / DSM 22644 / CIP 104116 / JCM 14847 / LMG 12228 / 1C / PRS 101 / PAO1</strain>
    </source>
</reference>
<comment type="function">
    <text evidence="1">Dehydrogenase that catalyzes the NAD(+)-dependent oxidation of formaldehyde and acetaldehyde.</text>
</comment>
<comment type="catalytic activity">
    <reaction evidence="1">
        <text>formaldehyde + NAD(+) + H2O = formate + NADH + 2 H(+)</text>
        <dbReference type="Rhea" id="RHEA:16425"/>
        <dbReference type="ChEBI" id="CHEBI:15377"/>
        <dbReference type="ChEBI" id="CHEBI:15378"/>
        <dbReference type="ChEBI" id="CHEBI:15740"/>
        <dbReference type="ChEBI" id="CHEBI:16842"/>
        <dbReference type="ChEBI" id="CHEBI:57540"/>
        <dbReference type="ChEBI" id="CHEBI:57945"/>
        <dbReference type="EC" id="1.2.1.46"/>
    </reaction>
</comment>
<comment type="catalytic activity">
    <reaction evidence="1">
        <text>acetaldehyde + NAD(+) + H2O = acetate + NADH + 2 H(+)</text>
        <dbReference type="Rhea" id="RHEA:25294"/>
        <dbReference type="ChEBI" id="CHEBI:15343"/>
        <dbReference type="ChEBI" id="CHEBI:15377"/>
        <dbReference type="ChEBI" id="CHEBI:15378"/>
        <dbReference type="ChEBI" id="CHEBI:30089"/>
        <dbReference type="ChEBI" id="CHEBI:57540"/>
        <dbReference type="ChEBI" id="CHEBI:57945"/>
    </reaction>
</comment>
<comment type="cofactor">
    <cofactor evidence="1">
        <name>Zn(2+)</name>
        <dbReference type="ChEBI" id="CHEBI:29105"/>
    </cofactor>
    <text evidence="1">Binds 2 Zn(2+) ions per subunit.</text>
</comment>
<comment type="subunit">
    <text evidence="1">Homotetramer.</text>
</comment>
<comment type="similarity">
    <text evidence="2">Belongs to the zinc-containing alcohol dehydrogenase family.</text>
</comment>
<evidence type="ECO:0000250" key="1">
    <source>
        <dbReference type="UniProtKB" id="P46154"/>
    </source>
</evidence>
<evidence type="ECO:0000305" key="2"/>
<dbReference type="EC" id="1.2.1.46" evidence="1"/>
<dbReference type="EMBL" id="AE004091">
    <property type="protein sequence ID" value="AAG08806.1"/>
    <property type="molecule type" value="Genomic_DNA"/>
</dbReference>
<dbReference type="PIR" id="E82969">
    <property type="entry name" value="E82969"/>
</dbReference>
<dbReference type="RefSeq" id="NP_254108.1">
    <property type="nucleotide sequence ID" value="NC_002516.2"/>
</dbReference>
<dbReference type="RefSeq" id="WP_003096788.1">
    <property type="nucleotide sequence ID" value="NZ_QZGE01000012.1"/>
</dbReference>
<dbReference type="SMR" id="Q9HTE3"/>
<dbReference type="STRING" id="208964.PA5421"/>
<dbReference type="PaxDb" id="208964-PA5421"/>
<dbReference type="GeneID" id="880053"/>
<dbReference type="KEGG" id="pae:PA5421"/>
<dbReference type="PATRIC" id="fig|208964.12.peg.5681"/>
<dbReference type="PseudoCAP" id="PA5421"/>
<dbReference type="HOGENOM" id="CLU_026673_11_3_6"/>
<dbReference type="InParanoid" id="Q9HTE3"/>
<dbReference type="OrthoDB" id="9773078at2"/>
<dbReference type="PhylomeDB" id="Q9HTE3"/>
<dbReference type="BioCyc" id="PAER208964:G1FZ6-5548-MONOMER"/>
<dbReference type="BRENDA" id="1.2.1.46">
    <property type="organism ID" value="5087"/>
</dbReference>
<dbReference type="Proteomes" id="UP000002438">
    <property type="component" value="Chromosome"/>
</dbReference>
<dbReference type="GO" id="GO:0140087">
    <property type="term" value="F:acetaldehyde dehydrogenase (NAD+) activity"/>
    <property type="evidence" value="ECO:0007669"/>
    <property type="project" value="RHEA"/>
</dbReference>
<dbReference type="GO" id="GO:0018467">
    <property type="term" value="F:formaldehyde dehydrogenase (NAD+) activity"/>
    <property type="evidence" value="ECO:0007669"/>
    <property type="project" value="UniProtKB-EC"/>
</dbReference>
<dbReference type="GO" id="GO:0008270">
    <property type="term" value="F:zinc ion binding"/>
    <property type="evidence" value="ECO:0007669"/>
    <property type="project" value="InterPro"/>
</dbReference>
<dbReference type="CDD" id="cd08282">
    <property type="entry name" value="PFDH_like"/>
    <property type="match status" value="1"/>
</dbReference>
<dbReference type="FunFam" id="3.40.50.720:FF:000166">
    <property type="entry name" value="Glutathione-independent formaldehyde dehydrogenase"/>
    <property type="match status" value="1"/>
</dbReference>
<dbReference type="Gene3D" id="3.90.180.10">
    <property type="entry name" value="Medium-chain alcohol dehydrogenases, catalytic domain"/>
    <property type="match status" value="1"/>
</dbReference>
<dbReference type="Gene3D" id="3.40.50.720">
    <property type="entry name" value="NAD(P)-binding Rossmann-like Domain"/>
    <property type="match status" value="1"/>
</dbReference>
<dbReference type="InterPro" id="IPR013149">
    <property type="entry name" value="ADH-like_C"/>
</dbReference>
<dbReference type="InterPro" id="IPR013154">
    <property type="entry name" value="ADH-like_N"/>
</dbReference>
<dbReference type="InterPro" id="IPR002328">
    <property type="entry name" value="ADH_Zn_CS"/>
</dbReference>
<dbReference type="InterPro" id="IPR011032">
    <property type="entry name" value="GroES-like_sf"/>
</dbReference>
<dbReference type="InterPro" id="IPR014184">
    <property type="entry name" value="HCHO_DH_non_GSH"/>
</dbReference>
<dbReference type="InterPro" id="IPR036291">
    <property type="entry name" value="NAD(P)-bd_dom_sf"/>
</dbReference>
<dbReference type="NCBIfam" id="TIGR02819">
    <property type="entry name" value="fdhA_non_GSH"/>
    <property type="match status" value="1"/>
</dbReference>
<dbReference type="PANTHER" id="PTHR42813:SF3">
    <property type="entry name" value="GLUTATHIONE-INDEPENDENT FORMALDEHYDE DEHYDROGENASE"/>
    <property type="match status" value="1"/>
</dbReference>
<dbReference type="PANTHER" id="PTHR42813">
    <property type="entry name" value="ZINC-TYPE ALCOHOL DEHYDROGENASE-LIKE"/>
    <property type="match status" value="1"/>
</dbReference>
<dbReference type="Pfam" id="PF08240">
    <property type="entry name" value="ADH_N"/>
    <property type="match status" value="1"/>
</dbReference>
<dbReference type="Pfam" id="PF00107">
    <property type="entry name" value="ADH_zinc_N"/>
    <property type="match status" value="1"/>
</dbReference>
<dbReference type="SUPFAM" id="SSF50129">
    <property type="entry name" value="GroES-like"/>
    <property type="match status" value="1"/>
</dbReference>
<dbReference type="SUPFAM" id="SSF51735">
    <property type="entry name" value="NAD(P)-binding Rossmann-fold domains"/>
    <property type="match status" value="1"/>
</dbReference>
<dbReference type="PROSITE" id="PS00059">
    <property type="entry name" value="ADH_ZINC"/>
    <property type="match status" value="1"/>
</dbReference>
<accession>Q9HTE3</accession>